<keyword id="KW-1185">Reference proteome</keyword>
<keyword id="KW-0687">Ribonucleoprotein</keyword>
<keyword id="KW-0689">Ribosomal protein</keyword>
<keyword id="KW-0694">RNA-binding</keyword>
<keyword id="KW-0699">rRNA-binding</keyword>
<evidence type="ECO:0000255" key="1">
    <source>
        <dbReference type="HAMAP-Rule" id="MF_01328"/>
    </source>
</evidence>
<evidence type="ECO:0000256" key="2">
    <source>
        <dbReference type="SAM" id="MobiDB-lite"/>
    </source>
</evidence>
<evidence type="ECO:0000305" key="3"/>
<organism>
    <name type="scientific">Malacoplasma penetrans (strain HF-2)</name>
    <name type="common">Mycoplasma penetrans</name>
    <dbReference type="NCBI Taxonomy" id="272633"/>
    <lineage>
        <taxon>Bacteria</taxon>
        <taxon>Bacillati</taxon>
        <taxon>Mycoplasmatota</taxon>
        <taxon>Mycoplasmoidales</taxon>
        <taxon>Mycoplasmoidaceae</taxon>
        <taxon>Malacoplasma</taxon>
    </lineage>
</organism>
<gene>
    <name evidence="1" type="primary">rplD</name>
    <name type="ordered locus">MYPE10170</name>
</gene>
<name>RL4_MALP2</name>
<dbReference type="EMBL" id="BA000026">
    <property type="protein sequence ID" value="BAC44802.1"/>
    <property type="molecule type" value="Genomic_DNA"/>
</dbReference>
<dbReference type="RefSeq" id="WP_011077830.1">
    <property type="nucleotide sequence ID" value="NC_004432.1"/>
</dbReference>
<dbReference type="SMR" id="Q8EUB4"/>
<dbReference type="FunCoup" id="Q8EUB4">
    <property type="interactions" value="259"/>
</dbReference>
<dbReference type="STRING" id="272633.gene:10732136"/>
<dbReference type="KEGG" id="mpe:MYPE10170"/>
<dbReference type="eggNOG" id="COG0088">
    <property type="taxonomic scope" value="Bacteria"/>
</dbReference>
<dbReference type="HOGENOM" id="CLU_041575_5_2_14"/>
<dbReference type="InParanoid" id="Q8EUB4"/>
<dbReference type="Proteomes" id="UP000002522">
    <property type="component" value="Chromosome"/>
</dbReference>
<dbReference type="GO" id="GO:1990904">
    <property type="term" value="C:ribonucleoprotein complex"/>
    <property type="evidence" value="ECO:0007669"/>
    <property type="project" value="UniProtKB-KW"/>
</dbReference>
<dbReference type="GO" id="GO:0005840">
    <property type="term" value="C:ribosome"/>
    <property type="evidence" value="ECO:0007669"/>
    <property type="project" value="UniProtKB-KW"/>
</dbReference>
<dbReference type="GO" id="GO:0019843">
    <property type="term" value="F:rRNA binding"/>
    <property type="evidence" value="ECO:0007669"/>
    <property type="project" value="UniProtKB-UniRule"/>
</dbReference>
<dbReference type="GO" id="GO:0003735">
    <property type="term" value="F:structural constituent of ribosome"/>
    <property type="evidence" value="ECO:0007669"/>
    <property type="project" value="InterPro"/>
</dbReference>
<dbReference type="GO" id="GO:0006412">
    <property type="term" value="P:translation"/>
    <property type="evidence" value="ECO:0007669"/>
    <property type="project" value="UniProtKB-UniRule"/>
</dbReference>
<dbReference type="Gene3D" id="3.40.1370.10">
    <property type="match status" value="1"/>
</dbReference>
<dbReference type="HAMAP" id="MF_01328_B">
    <property type="entry name" value="Ribosomal_uL4_B"/>
    <property type="match status" value="1"/>
</dbReference>
<dbReference type="InterPro" id="IPR002136">
    <property type="entry name" value="Ribosomal_uL4"/>
</dbReference>
<dbReference type="InterPro" id="IPR013005">
    <property type="entry name" value="Ribosomal_uL4-like"/>
</dbReference>
<dbReference type="InterPro" id="IPR023574">
    <property type="entry name" value="Ribosomal_uL4_dom_sf"/>
</dbReference>
<dbReference type="NCBIfam" id="TIGR03953">
    <property type="entry name" value="rplD_bact"/>
    <property type="match status" value="1"/>
</dbReference>
<dbReference type="PANTHER" id="PTHR10746">
    <property type="entry name" value="50S RIBOSOMAL PROTEIN L4"/>
    <property type="match status" value="1"/>
</dbReference>
<dbReference type="PANTHER" id="PTHR10746:SF6">
    <property type="entry name" value="LARGE RIBOSOMAL SUBUNIT PROTEIN UL4M"/>
    <property type="match status" value="1"/>
</dbReference>
<dbReference type="Pfam" id="PF00573">
    <property type="entry name" value="Ribosomal_L4"/>
    <property type="match status" value="1"/>
</dbReference>
<dbReference type="SUPFAM" id="SSF52166">
    <property type="entry name" value="Ribosomal protein L4"/>
    <property type="match status" value="1"/>
</dbReference>
<protein>
    <recommendedName>
        <fullName evidence="1">Large ribosomal subunit protein uL4</fullName>
    </recommendedName>
    <alternativeName>
        <fullName evidence="3">50S ribosomal protein L4</fullName>
    </alternativeName>
</protein>
<comment type="function">
    <text evidence="1">One of the primary rRNA binding proteins, this protein initially binds near the 5'-end of the 23S rRNA. It is important during the early stages of 50S assembly. It makes multiple contacts with different domains of the 23S rRNA in the assembled 50S subunit and ribosome.</text>
</comment>
<comment type="function">
    <text evidence="1">Forms part of the polypeptide exit tunnel.</text>
</comment>
<comment type="subunit">
    <text evidence="1">Part of the 50S ribosomal subunit.</text>
</comment>
<comment type="similarity">
    <text evidence="1">Belongs to the universal ribosomal protein uL4 family.</text>
</comment>
<proteinExistence type="inferred from homology"/>
<reference key="1">
    <citation type="journal article" date="2002" name="Nucleic Acids Res.">
        <title>The complete genomic sequence of Mycoplasma penetrans, an intracellular bacterial pathogen in humans.</title>
        <authorList>
            <person name="Sasaki Y."/>
            <person name="Ishikawa J."/>
            <person name="Yamashita A."/>
            <person name="Oshima K."/>
            <person name="Kenri T."/>
            <person name="Furuya K."/>
            <person name="Yoshino C."/>
            <person name="Horino A."/>
            <person name="Shiba T."/>
            <person name="Sasaki T."/>
            <person name="Hattori M."/>
        </authorList>
    </citation>
    <scope>NUCLEOTIDE SEQUENCE [LARGE SCALE GENOMIC DNA]</scope>
    <source>
        <strain>HF-2</strain>
    </source>
</reference>
<feature type="chain" id="PRO_0000129243" description="Large ribosomal subunit protein uL4">
    <location>
        <begin position="1"/>
        <end position="213"/>
    </location>
</feature>
<feature type="region of interest" description="Disordered" evidence="2">
    <location>
        <begin position="51"/>
        <end position="90"/>
    </location>
</feature>
<feature type="compositionally biased region" description="Basic residues" evidence="2">
    <location>
        <begin position="63"/>
        <end position="75"/>
    </location>
</feature>
<sequence length="213" mass="24088">MSSVKLFKDLLGNTETVELKNKKLFISDKKINHQEIFNSVLVEEANSRQSTASTLTKAEVRGGGRKPYKQKHTGRARQGSIRNPHYVGGGRAFGPSPEKNYTLKQNSKAYKLAFQSAMTLKLNEQGLNLLVNKIDMKEPSTKTISKMLKKVSYENKKVLFVINDKNENFLKSCKNIQKVTSKMWNQVSVRDILNSDIAVIQEDAFDKISEVFA</sequence>
<accession>Q8EUB4</accession>